<accession>P0A6T9</accession>
<accession>P23884</accession>
<accession>Q2M9T7</accession>
<accession>Q8Z3W9</accession>
<gene>
    <name evidence="1 3" type="primary">gcvH</name>
    <name type="ordered locus">b2904</name>
    <name type="ordered locus">JW2872</name>
</gene>
<organism>
    <name type="scientific">Escherichia coli (strain K12)</name>
    <dbReference type="NCBI Taxonomy" id="83333"/>
    <lineage>
        <taxon>Bacteria</taxon>
        <taxon>Pseudomonadati</taxon>
        <taxon>Pseudomonadota</taxon>
        <taxon>Gammaproteobacteria</taxon>
        <taxon>Enterobacterales</taxon>
        <taxon>Enterobacteriaceae</taxon>
        <taxon>Escherichia</taxon>
    </lineage>
</organism>
<keyword id="KW-0002">3D-structure</keyword>
<keyword id="KW-0903">Direct protein sequencing</keyword>
<keyword id="KW-0450">Lipoyl</keyword>
<keyword id="KW-1185">Reference proteome</keyword>
<proteinExistence type="evidence at protein level"/>
<comment type="function">
    <text evidence="1 2">The glycine cleavage system catalyzes the degradation of glycine. The H protein shuttles the methylamine group of glycine from the P protein to the T protein.</text>
</comment>
<comment type="cofactor">
    <cofactor evidence="1">
        <name>(R)-lipoate</name>
        <dbReference type="ChEBI" id="CHEBI:83088"/>
    </cofactor>
    <text evidence="1">Binds 1 lipoyl cofactor covalently.</text>
</comment>
<comment type="subunit">
    <text evidence="1 2">The glycine cleavage system is composed of four proteins: P, T, L and H.</text>
</comment>
<comment type="similarity">
    <text evidence="1">Belongs to the GcvH family.</text>
</comment>
<dbReference type="EMBL" id="M57690">
    <property type="protein sequence ID" value="AAA68887.1"/>
    <property type="molecule type" value="Genomic_DNA"/>
</dbReference>
<dbReference type="EMBL" id="X73958">
    <property type="protein sequence ID" value="CAA52145.1"/>
    <property type="molecule type" value="Genomic_DNA"/>
</dbReference>
<dbReference type="EMBL" id="U28377">
    <property type="protein sequence ID" value="AAA69072.1"/>
    <property type="molecule type" value="Genomic_DNA"/>
</dbReference>
<dbReference type="EMBL" id="U00096">
    <property type="protein sequence ID" value="AAC75942.1"/>
    <property type="molecule type" value="Genomic_DNA"/>
</dbReference>
<dbReference type="EMBL" id="M97263">
    <property type="protein sequence ID" value="AAC36844.1"/>
    <property type="molecule type" value="Unassigned_DNA"/>
</dbReference>
<dbReference type="EMBL" id="L20872">
    <property type="protein sequence ID" value="AAA23866.1"/>
    <property type="molecule type" value="Genomic_DNA"/>
</dbReference>
<dbReference type="EMBL" id="AP009048">
    <property type="protein sequence ID" value="BAE76969.1"/>
    <property type="molecule type" value="Genomic_DNA"/>
</dbReference>
<dbReference type="PIR" id="A56623">
    <property type="entry name" value="A56623"/>
</dbReference>
<dbReference type="RefSeq" id="NP_417380.1">
    <property type="nucleotide sequence ID" value="NC_000913.3"/>
</dbReference>
<dbReference type="RefSeq" id="WP_001295377.1">
    <property type="nucleotide sequence ID" value="NZ_STEB01000001.1"/>
</dbReference>
<dbReference type="PDB" id="3A7A">
    <property type="method" value="X-ray"/>
    <property type="resolution" value="3.10 A"/>
    <property type="chains" value="B/D=2-129"/>
</dbReference>
<dbReference type="PDB" id="3A7L">
    <property type="method" value="X-ray"/>
    <property type="resolution" value="1.30 A"/>
    <property type="chains" value="A=2-129"/>
</dbReference>
<dbReference type="PDB" id="3A8I">
    <property type="method" value="X-ray"/>
    <property type="resolution" value="1.99 A"/>
    <property type="chains" value="E/F=1-129"/>
</dbReference>
<dbReference type="PDB" id="3A8J">
    <property type="method" value="X-ray"/>
    <property type="resolution" value="1.98 A"/>
    <property type="chains" value="E/F=1-129"/>
</dbReference>
<dbReference type="PDB" id="3A8K">
    <property type="method" value="X-ray"/>
    <property type="resolution" value="1.95 A"/>
    <property type="chains" value="E/F=1-129"/>
</dbReference>
<dbReference type="PDB" id="3AB9">
    <property type="method" value="X-ray"/>
    <property type="resolution" value="1.65 A"/>
    <property type="chains" value="A=1-129"/>
</dbReference>
<dbReference type="PDBsum" id="3A7A"/>
<dbReference type="PDBsum" id="3A7L"/>
<dbReference type="PDBsum" id="3A8I"/>
<dbReference type="PDBsum" id="3A8J"/>
<dbReference type="PDBsum" id="3A8K"/>
<dbReference type="PDBsum" id="3AB9"/>
<dbReference type="SMR" id="P0A6T9"/>
<dbReference type="BioGRID" id="4261019">
    <property type="interactions" value="43"/>
</dbReference>
<dbReference type="BioGRID" id="851715">
    <property type="interactions" value="2"/>
</dbReference>
<dbReference type="ComplexPortal" id="CPX-3949">
    <property type="entry name" value="Glycine cleavage system complex"/>
</dbReference>
<dbReference type="FunCoup" id="P0A6T9">
    <property type="interactions" value="844"/>
</dbReference>
<dbReference type="IntAct" id="P0A6T9">
    <property type="interactions" value="2"/>
</dbReference>
<dbReference type="STRING" id="511145.b2904"/>
<dbReference type="jPOST" id="P0A6T9"/>
<dbReference type="PaxDb" id="511145-b2904"/>
<dbReference type="EnsemblBacteria" id="AAC75942">
    <property type="protein sequence ID" value="AAC75942"/>
    <property type="gene ID" value="b2904"/>
</dbReference>
<dbReference type="GeneID" id="93779098"/>
<dbReference type="GeneID" id="947393"/>
<dbReference type="KEGG" id="ecj:JW2872"/>
<dbReference type="KEGG" id="eco:b2904"/>
<dbReference type="KEGG" id="ecoc:C3026_15920"/>
<dbReference type="PATRIC" id="fig|1411691.4.peg.3828"/>
<dbReference type="EchoBASE" id="EB0366"/>
<dbReference type="eggNOG" id="COG0509">
    <property type="taxonomic scope" value="Bacteria"/>
</dbReference>
<dbReference type="HOGENOM" id="CLU_097408_2_1_6"/>
<dbReference type="InParanoid" id="P0A6T9"/>
<dbReference type="OMA" id="KEHEWIR"/>
<dbReference type="OrthoDB" id="9796712at2"/>
<dbReference type="PhylomeDB" id="P0A6T9"/>
<dbReference type="BioCyc" id="EcoCyc:GCVH-MONOMER"/>
<dbReference type="BioCyc" id="MetaCyc:GCVH-MONOMER"/>
<dbReference type="BRENDA" id="1.4.1.27">
    <property type="organism ID" value="2026"/>
</dbReference>
<dbReference type="EvolutionaryTrace" id="P0A6T9"/>
<dbReference type="PRO" id="PR:P0A6T9"/>
<dbReference type="Proteomes" id="UP000000625">
    <property type="component" value="Chromosome"/>
</dbReference>
<dbReference type="GO" id="GO:0005737">
    <property type="term" value="C:cytoplasm"/>
    <property type="evidence" value="ECO:0000314"/>
    <property type="project" value="EcoliWiki"/>
</dbReference>
<dbReference type="GO" id="GO:0005829">
    <property type="term" value="C:cytosol"/>
    <property type="evidence" value="ECO:0000314"/>
    <property type="project" value="EcoCyc"/>
</dbReference>
<dbReference type="GO" id="GO:0005960">
    <property type="term" value="C:glycine cleavage complex"/>
    <property type="evidence" value="ECO:0000303"/>
    <property type="project" value="ComplexPortal"/>
</dbReference>
<dbReference type="GO" id="GO:0019464">
    <property type="term" value="P:glycine decarboxylation via glycine cleavage system"/>
    <property type="evidence" value="ECO:0000303"/>
    <property type="project" value="ComplexPortal"/>
</dbReference>
<dbReference type="GO" id="GO:0006730">
    <property type="term" value="P:one-carbon metabolic process"/>
    <property type="evidence" value="ECO:0000303"/>
    <property type="project" value="ComplexPortal"/>
</dbReference>
<dbReference type="CDD" id="cd06848">
    <property type="entry name" value="GCS_H"/>
    <property type="match status" value="1"/>
</dbReference>
<dbReference type="FunFam" id="2.40.50.100:FF:000011">
    <property type="entry name" value="Glycine cleavage system H protein"/>
    <property type="match status" value="1"/>
</dbReference>
<dbReference type="Gene3D" id="2.40.50.100">
    <property type="match status" value="1"/>
</dbReference>
<dbReference type="HAMAP" id="MF_00272">
    <property type="entry name" value="GcvH"/>
    <property type="match status" value="1"/>
</dbReference>
<dbReference type="InterPro" id="IPR003016">
    <property type="entry name" value="2-oxoA_DH_lipoyl-BS"/>
</dbReference>
<dbReference type="InterPro" id="IPR000089">
    <property type="entry name" value="Biotin_lipoyl"/>
</dbReference>
<dbReference type="InterPro" id="IPR002930">
    <property type="entry name" value="GCV_H"/>
</dbReference>
<dbReference type="InterPro" id="IPR033753">
    <property type="entry name" value="GCV_H/Fam206"/>
</dbReference>
<dbReference type="InterPro" id="IPR017453">
    <property type="entry name" value="GCV_H_sub"/>
</dbReference>
<dbReference type="InterPro" id="IPR011053">
    <property type="entry name" value="Single_hybrid_motif"/>
</dbReference>
<dbReference type="NCBIfam" id="TIGR00527">
    <property type="entry name" value="gcvH"/>
    <property type="match status" value="1"/>
</dbReference>
<dbReference type="NCBIfam" id="NF002270">
    <property type="entry name" value="PRK01202.1"/>
    <property type="match status" value="1"/>
</dbReference>
<dbReference type="PANTHER" id="PTHR11715">
    <property type="entry name" value="GLYCINE CLEAVAGE SYSTEM H PROTEIN"/>
    <property type="match status" value="1"/>
</dbReference>
<dbReference type="PANTHER" id="PTHR11715:SF3">
    <property type="entry name" value="GLYCINE CLEAVAGE SYSTEM H PROTEIN-RELATED"/>
    <property type="match status" value="1"/>
</dbReference>
<dbReference type="Pfam" id="PF01597">
    <property type="entry name" value="GCV_H"/>
    <property type="match status" value="1"/>
</dbReference>
<dbReference type="SUPFAM" id="SSF51230">
    <property type="entry name" value="Single hybrid motif"/>
    <property type="match status" value="1"/>
</dbReference>
<dbReference type="PROSITE" id="PS50968">
    <property type="entry name" value="BIOTINYL_LIPOYL"/>
    <property type="match status" value="1"/>
</dbReference>
<dbReference type="PROSITE" id="PS00189">
    <property type="entry name" value="LIPOYL"/>
    <property type="match status" value="1"/>
</dbReference>
<sequence>MSNVPAELKYSKEHEWLRKEADGTYTVGITEHAQELLGDMVFVDLPEVGATVSAGDDCAVAESVKAASDIYAPVSGEIVAVNDALSDSPELVNSEPYAGGWIFKIKASDESELESLLDATAYEALLEDE</sequence>
<name>GCSH_ECOLI</name>
<reference key="1">
    <citation type="journal article" date="1991" name="DNA Seq.">
        <title>An Escherichia coli protein with homology to the H-protein of the glycine cleavage enzyme complex from pea and chicken liver.</title>
        <authorList>
            <person name="Stauffer L.T."/>
            <person name="Steiert P.S."/>
            <person name="Steiert J.G."/>
            <person name="Stauffer G.V."/>
        </authorList>
    </citation>
    <scope>NUCLEOTIDE SEQUENCE [GENOMIC DNA]</scope>
    <source>
        <strain>K12</strain>
    </source>
</reference>
<reference key="2">
    <citation type="journal article" date="1993" name="Eur. J. Biochem.">
        <title>Cloning and nucleotide sequence of the gcv operon encoding the Escherichia coli glycine-cleavage system.</title>
        <authorList>
            <person name="Okamura-Ikeda K."/>
            <person name="Ohmura Y."/>
            <person name="Fujiwara K."/>
            <person name="Motokawa Y."/>
        </authorList>
    </citation>
    <scope>NUCLEOTIDE SEQUENCE [GENOMIC DNA]</scope>
    <scope>PROTEIN SEQUENCE OF 2-21</scope>
    <scope>FUNCTION</scope>
    <scope>SUBUNIT</scope>
    <source>
        <strain>K12 / W3110 / ATCC 27325 / DSM 5911</strain>
    </source>
</reference>
<reference key="3">
    <citation type="journal article" date="1997" name="Science">
        <title>The complete genome sequence of Escherichia coli K-12.</title>
        <authorList>
            <person name="Blattner F.R."/>
            <person name="Plunkett G. III"/>
            <person name="Bloch C.A."/>
            <person name="Perna N.T."/>
            <person name="Burland V."/>
            <person name="Riley M."/>
            <person name="Collado-Vides J."/>
            <person name="Glasner J.D."/>
            <person name="Rode C.K."/>
            <person name="Mayhew G.F."/>
            <person name="Gregor J."/>
            <person name="Davis N.W."/>
            <person name="Kirkpatrick H.A."/>
            <person name="Goeden M.A."/>
            <person name="Rose D.J."/>
            <person name="Mau B."/>
            <person name="Shao Y."/>
        </authorList>
    </citation>
    <scope>NUCLEOTIDE SEQUENCE [LARGE SCALE GENOMIC DNA]</scope>
    <source>
        <strain>K12 / MG1655 / ATCC 47076</strain>
    </source>
</reference>
<reference key="4">
    <citation type="journal article" date="2006" name="Mol. Syst. Biol.">
        <title>Highly accurate genome sequences of Escherichia coli K-12 strains MG1655 and W3110.</title>
        <authorList>
            <person name="Hayashi K."/>
            <person name="Morooka N."/>
            <person name="Yamamoto Y."/>
            <person name="Fujita K."/>
            <person name="Isono K."/>
            <person name="Choi S."/>
            <person name="Ohtsubo E."/>
            <person name="Baba T."/>
            <person name="Wanner B.L."/>
            <person name="Mori H."/>
            <person name="Horiuchi T."/>
        </authorList>
    </citation>
    <scope>NUCLEOTIDE SEQUENCE [LARGE SCALE GENOMIC DNA]</scope>
    <source>
        <strain>K12 / W3110 / ATCC 27325 / DSM 5911</strain>
    </source>
</reference>
<reference key="5">
    <citation type="journal article" date="1993" name="DNA Seq.">
        <title>The Escherichia coli gcvT gene encoding the T-protein of the glycine cleavage enzyme system.</title>
        <authorList>
            <person name="Stauffer L.T."/>
            <person name="Ghrist A."/>
            <person name="Stauffer G.V."/>
        </authorList>
    </citation>
    <scope>NUCLEOTIDE SEQUENCE [GENOMIC DNA] OF 1-44</scope>
    <source>
        <strain>K12</strain>
    </source>
</reference>
<reference key="6">
    <citation type="journal article" date="1994" name="Gene">
        <title>Characterization of the Escherichia coli gcv operon.</title>
        <authorList>
            <person name="Stauffer L.T."/>
            <person name="Fogarty S.J."/>
            <person name="Stauffer G.V."/>
        </authorList>
    </citation>
    <scope>NUCLEOTIDE SEQUENCE [GENOMIC DNA] OF 103-129</scope>
</reference>
<evidence type="ECO:0000255" key="1">
    <source>
        <dbReference type="HAMAP-Rule" id="MF_00272"/>
    </source>
</evidence>
<evidence type="ECO:0000269" key="2">
    <source>
    </source>
</evidence>
<evidence type="ECO:0000303" key="3">
    <source>
    </source>
</evidence>
<evidence type="ECO:0007829" key="4">
    <source>
        <dbReference type="PDB" id="3A7L"/>
    </source>
</evidence>
<evidence type="ECO:0007829" key="5">
    <source>
        <dbReference type="PDB" id="3A8I"/>
    </source>
</evidence>
<evidence type="ECO:0007829" key="6">
    <source>
        <dbReference type="PDB" id="3A8K"/>
    </source>
</evidence>
<protein>
    <recommendedName>
        <fullName evidence="1">Glycine cleavage system H protein</fullName>
    </recommendedName>
</protein>
<feature type="initiator methionine" description="Removed" evidence="2">
    <location>
        <position position="1"/>
    </location>
</feature>
<feature type="chain" id="PRO_0000166218" description="Glycine cleavage system H protein">
    <location>
        <begin position="2"/>
        <end position="129"/>
    </location>
</feature>
<feature type="domain" description="Lipoyl-binding" evidence="1">
    <location>
        <begin position="24"/>
        <end position="106"/>
    </location>
</feature>
<feature type="modified residue" description="N6-lipoyllysine" evidence="1">
    <location>
        <position position="65"/>
    </location>
</feature>
<feature type="strand" evidence="6">
    <location>
        <begin position="9"/>
        <end position="11"/>
    </location>
</feature>
<feature type="strand" evidence="4">
    <location>
        <begin position="14"/>
        <end position="19"/>
    </location>
</feature>
<feature type="strand" evidence="4">
    <location>
        <begin position="25"/>
        <end position="29"/>
    </location>
</feature>
<feature type="helix" evidence="4">
    <location>
        <begin position="31"/>
        <end position="37"/>
    </location>
</feature>
<feature type="strand" evidence="4">
    <location>
        <begin position="39"/>
        <end position="44"/>
    </location>
</feature>
<feature type="strand" evidence="4">
    <location>
        <begin position="57"/>
        <end position="65"/>
    </location>
</feature>
<feature type="strand" evidence="4">
    <location>
        <begin position="67"/>
        <end position="71"/>
    </location>
</feature>
<feature type="strand" evidence="4">
    <location>
        <begin position="73"/>
        <end position="81"/>
    </location>
</feature>
<feature type="helix" evidence="4">
    <location>
        <begin position="83"/>
        <end position="86"/>
    </location>
</feature>
<feature type="helix" evidence="4">
    <location>
        <begin position="91"/>
        <end position="94"/>
    </location>
</feature>
<feature type="turn" evidence="4">
    <location>
        <begin position="96"/>
        <end position="100"/>
    </location>
</feature>
<feature type="strand" evidence="4">
    <location>
        <begin position="103"/>
        <end position="108"/>
    </location>
</feature>
<feature type="helix" evidence="4">
    <location>
        <begin position="110"/>
        <end position="115"/>
    </location>
</feature>
<feature type="strand" evidence="5">
    <location>
        <begin position="116"/>
        <end position="118"/>
    </location>
</feature>
<feature type="helix" evidence="4">
    <location>
        <begin position="119"/>
        <end position="127"/>
    </location>
</feature>